<proteinExistence type="evidence at protein level"/>
<sequence length="461" mass="51022">MASSLPLLPKPISPFFKTPPFSTSKPLVFLNFQTRLTSRSSDVSVNLKKKNNPWLDPFDSGEDPDNEYGSLFADGKQDEDPRPPDNPDNPYGFLKFPKGYTVELASLPLKIRGDVRRCCCVISGGVYENLLFFPTIQLIKDRYPGVQVDILTTERGKQTYELNKNVRWANVYDPDDHWPEPAEYTDMIGLLKGRYYDMVLSTKLAGLGHAAFLFMTTARDRVSYIYPNVNSAGAGLMLSETFTAENTNLSELGYSMYTQMEDWLGRPFRSVPRTPLLPLRVSISRKVKEVVAAKYRNAGAVTGKFIVIHGIESDSKASMQSKGDADSLLSLEKWAKIIKGVRGFKPVFVIPHEKERENVEDFVGDDTSIVFITTPGQLAALINDSAGVIATNTAAIQLANARDKPCIGLFSSEEKGKLFVPYAEEKSNCVIIASKTGKLADIDIGTVKNAMQVFEGSLALV</sequence>
<organism>
    <name type="scientific">Arabidopsis thaliana</name>
    <name type="common">Mouse-ear cress</name>
    <dbReference type="NCBI Taxonomy" id="3702"/>
    <lineage>
        <taxon>Eukaryota</taxon>
        <taxon>Viridiplantae</taxon>
        <taxon>Streptophyta</taxon>
        <taxon>Embryophyta</taxon>
        <taxon>Tracheophyta</taxon>
        <taxon>Spermatophyta</taxon>
        <taxon>Magnoliopsida</taxon>
        <taxon>eudicotyledons</taxon>
        <taxon>Gunneridae</taxon>
        <taxon>Pentapetalae</taxon>
        <taxon>rosids</taxon>
        <taxon>malvids</taxon>
        <taxon>Brassicales</taxon>
        <taxon>Brassicaceae</taxon>
        <taxon>Camelineae</taxon>
        <taxon>Arabidopsis</taxon>
    </lineage>
</organism>
<reference key="1">
    <citation type="journal article" date="2014" name="Plant J.">
        <title>The plant glycosyltransferase clone collection for functional genomics.</title>
        <authorList>
            <person name="Lao J."/>
            <person name="Oikawa A."/>
            <person name="Bromley J.R."/>
            <person name="McInerney P."/>
            <person name="Suttangkakul A."/>
            <person name="Smith-Moritz A.M."/>
            <person name="Plahar H."/>
            <person name="Chiu T.-Y."/>
            <person name="Gonzalez Fernandez-Nino S.M.G."/>
            <person name="Ebert B."/>
            <person name="Yang F."/>
            <person name="Christiansen K.M."/>
            <person name="Hansen S.F."/>
            <person name="Stonebloom S."/>
            <person name="Adams P.D."/>
            <person name="Ronald P.C."/>
            <person name="Hillson N.J."/>
            <person name="Hadi M.Z."/>
            <person name="Vega-Sanchez M.E."/>
            <person name="Loque D."/>
            <person name="Scheller H.V."/>
            <person name="Heazlewood J.L."/>
        </authorList>
    </citation>
    <scope>NUCLEOTIDE SEQUENCE [MRNA]</scope>
    <source>
        <strain>cv. Columbia</strain>
    </source>
</reference>
<reference key="2">
    <citation type="journal article" date="2000" name="Nature">
        <title>Sequence and analysis of chromosome 1 of the plant Arabidopsis thaliana.</title>
        <authorList>
            <person name="Theologis A."/>
            <person name="Ecker J.R."/>
            <person name="Palm C.J."/>
            <person name="Federspiel N.A."/>
            <person name="Kaul S."/>
            <person name="White O."/>
            <person name="Alonso J."/>
            <person name="Altafi H."/>
            <person name="Araujo R."/>
            <person name="Bowman C.L."/>
            <person name="Brooks S.Y."/>
            <person name="Buehler E."/>
            <person name="Chan A."/>
            <person name="Chao Q."/>
            <person name="Chen H."/>
            <person name="Cheuk R.F."/>
            <person name="Chin C.W."/>
            <person name="Chung M.K."/>
            <person name="Conn L."/>
            <person name="Conway A.B."/>
            <person name="Conway A.R."/>
            <person name="Creasy T.H."/>
            <person name="Dewar K."/>
            <person name="Dunn P."/>
            <person name="Etgu P."/>
            <person name="Feldblyum T.V."/>
            <person name="Feng J.-D."/>
            <person name="Fong B."/>
            <person name="Fujii C.Y."/>
            <person name="Gill J.E."/>
            <person name="Goldsmith A.D."/>
            <person name="Haas B."/>
            <person name="Hansen N.F."/>
            <person name="Hughes B."/>
            <person name="Huizar L."/>
            <person name="Hunter J.L."/>
            <person name="Jenkins J."/>
            <person name="Johnson-Hopson C."/>
            <person name="Khan S."/>
            <person name="Khaykin E."/>
            <person name="Kim C.J."/>
            <person name="Koo H.L."/>
            <person name="Kremenetskaia I."/>
            <person name="Kurtz D.B."/>
            <person name="Kwan A."/>
            <person name="Lam B."/>
            <person name="Langin-Hooper S."/>
            <person name="Lee A."/>
            <person name="Lee J.M."/>
            <person name="Lenz C.A."/>
            <person name="Li J.H."/>
            <person name="Li Y.-P."/>
            <person name="Lin X."/>
            <person name="Liu S.X."/>
            <person name="Liu Z.A."/>
            <person name="Luros J.S."/>
            <person name="Maiti R."/>
            <person name="Marziali A."/>
            <person name="Militscher J."/>
            <person name="Miranda M."/>
            <person name="Nguyen M."/>
            <person name="Nierman W.C."/>
            <person name="Osborne B.I."/>
            <person name="Pai G."/>
            <person name="Peterson J."/>
            <person name="Pham P.K."/>
            <person name="Rizzo M."/>
            <person name="Rooney T."/>
            <person name="Rowley D."/>
            <person name="Sakano H."/>
            <person name="Salzberg S.L."/>
            <person name="Schwartz J.R."/>
            <person name="Shinn P."/>
            <person name="Southwick A.M."/>
            <person name="Sun H."/>
            <person name="Tallon L.J."/>
            <person name="Tambunga G."/>
            <person name="Toriumi M.J."/>
            <person name="Town C.D."/>
            <person name="Utterback T."/>
            <person name="Van Aken S."/>
            <person name="Vaysberg M."/>
            <person name="Vysotskaia V.S."/>
            <person name="Walker M."/>
            <person name="Wu D."/>
            <person name="Yu G."/>
            <person name="Fraser C.M."/>
            <person name="Venter J.C."/>
            <person name="Davis R.W."/>
        </authorList>
    </citation>
    <scope>NUCLEOTIDE SEQUENCE [LARGE SCALE GENOMIC DNA]</scope>
    <source>
        <strain>cv. Columbia</strain>
    </source>
</reference>
<reference key="3">
    <citation type="journal article" date="2017" name="Plant J.">
        <title>Araport11: a complete reannotation of the Arabidopsis thaliana reference genome.</title>
        <authorList>
            <person name="Cheng C.Y."/>
            <person name="Krishnakumar V."/>
            <person name="Chan A.P."/>
            <person name="Thibaud-Nissen F."/>
            <person name="Schobel S."/>
            <person name="Town C.D."/>
        </authorList>
    </citation>
    <scope>GENOME REANNOTATION</scope>
    <source>
        <strain>cv. Columbia</strain>
    </source>
</reference>
<reference key="4">
    <citation type="journal article" date="2003" name="Science">
        <title>Empirical analysis of transcriptional activity in the Arabidopsis genome.</title>
        <authorList>
            <person name="Yamada K."/>
            <person name="Lim J."/>
            <person name="Dale J.M."/>
            <person name="Chen H."/>
            <person name="Shinn P."/>
            <person name="Palm C.J."/>
            <person name="Southwick A.M."/>
            <person name="Wu H.C."/>
            <person name="Kim C.J."/>
            <person name="Nguyen M."/>
            <person name="Pham P.K."/>
            <person name="Cheuk R.F."/>
            <person name="Karlin-Newmann G."/>
            <person name="Liu S.X."/>
            <person name="Lam B."/>
            <person name="Sakano H."/>
            <person name="Wu T."/>
            <person name="Yu G."/>
            <person name="Miranda M."/>
            <person name="Quach H.L."/>
            <person name="Tripp M."/>
            <person name="Chang C.H."/>
            <person name="Lee J.M."/>
            <person name="Toriumi M.J."/>
            <person name="Chan M.M."/>
            <person name="Tang C.C."/>
            <person name="Onodera C.S."/>
            <person name="Deng J.M."/>
            <person name="Akiyama K."/>
            <person name="Ansari Y."/>
            <person name="Arakawa T."/>
            <person name="Banh J."/>
            <person name="Banno F."/>
            <person name="Bowser L."/>
            <person name="Brooks S.Y."/>
            <person name="Carninci P."/>
            <person name="Chao Q."/>
            <person name="Choy N."/>
            <person name="Enju A."/>
            <person name="Goldsmith A.D."/>
            <person name="Gurjal M."/>
            <person name="Hansen N.F."/>
            <person name="Hayashizaki Y."/>
            <person name="Johnson-Hopson C."/>
            <person name="Hsuan V.W."/>
            <person name="Iida K."/>
            <person name="Karnes M."/>
            <person name="Khan S."/>
            <person name="Koesema E."/>
            <person name="Ishida J."/>
            <person name="Jiang P.X."/>
            <person name="Jones T."/>
            <person name="Kawai J."/>
            <person name="Kamiya A."/>
            <person name="Meyers C."/>
            <person name="Nakajima M."/>
            <person name="Narusaka M."/>
            <person name="Seki M."/>
            <person name="Sakurai T."/>
            <person name="Satou M."/>
            <person name="Tamse R."/>
            <person name="Vaysberg M."/>
            <person name="Wallender E.K."/>
            <person name="Wong C."/>
            <person name="Yamamura Y."/>
            <person name="Yuan S."/>
            <person name="Shinozaki K."/>
            <person name="Davis R.W."/>
            <person name="Theologis A."/>
            <person name="Ecker J.R."/>
        </authorList>
    </citation>
    <scope>NUCLEOTIDE SEQUENCE [LARGE SCALE MRNA]</scope>
    <source>
        <strain>cv. Columbia</strain>
    </source>
</reference>
<reference key="5">
    <citation type="submission" date="2002-03" db="EMBL/GenBank/DDBJ databases">
        <title>Full-length cDNA from Arabidopsis thaliana.</title>
        <authorList>
            <person name="Brover V.V."/>
            <person name="Troukhan M.E."/>
            <person name="Alexandrov N.A."/>
            <person name="Lu Y.-P."/>
            <person name="Flavell R.B."/>
            <person name="Feldmann K.A."/>
        </authorList>
    </citation>
    <scope>NUCLEOTIDE SEQUENCE [LARGE SCALE MRNA]</scope>
</reference>
<reference key="6">
    <citation type="journal article" date="2009" name="J. Biol. Chem.">
        <title>Novel nuclear-encoded subunits of the chloroplast NAD(P)H dehydrogenase complex.</title>
        <authorList>
            <person name="Sirpio S."/>
            <person name="Allahverdiyeva Y."/>
            <person name="Holmstrom M."/>
            <person name="Khrouchtchova A."/>
            <person name="Haldrup A."/>
            <person name="Battchikova N."/>
            <person name="Aro E.M."/>
        </authorList>
    </citation>
    <scope>COMPONENT OF THE NDH COMPLEX</scope>
    <scope>SUBCELLULAR LOCATION</scope>
    <scope>DISRUPTION PHENOTYPE</scope>
</reference>
<reference key="7">
    <citation type="journal article" date="2009" name="Mol. Plant">
        <title>Towards characterization of the chloroplast NAD(P)H dehydrogenase complex.</title>
        <authorList>
            <person name="Suorsa M."/>
            <person name="Sirpioe S."/>
            <person name="Aro E.M."/>
        </authorList>
    </citation>
    <scope>REVIEW</scope>
</reference>
<reference key="8">
    <citation type="journal article" date="2009" name="Plant J.">
        <title>Three novel subunits of Arabidopsis chloroplastic NAD(P)H dehydrogenase identified by bioinformatic and reverse genetic approaches.</title>
        <authorList>
            <person name="Takabayashi A."/>
            <person name="Ishikawa N."/>
            <person name="Obayashi T."/>
            <person name="Ishida S."/>
            <person name="Obokata J."/>
            <person name="Endo T."/>
            <person name="Sato F."/>
        </authorList>
    </citation>
    <scope>COMPONENT OF THE NDH COMPLEX</scope>
    <scope>SUBCELLULAR LOCATION</scope>
    <scope>DISRUPTION PHENOTYPE</scope>
</reference>
<reference key="9">
    <citation type="journal article" date="2011" name="Biochim. Biophys. Acta">
        <title>Structure and biogenesis of the chloroplast NAD(P)H dehydrogenase complex.</title>
        <authorList>
            <person name="Peng L."/>
            <person name="Yamamoto H."/>
            <person name="Shikanai T."/>
        </authorList>
    </citation>
    <scope>REVIEW</scope>
</reference>
<reference key="10">
    <citation type="journal article" date="2011" name="Plant Cell Physiol.">
        <title>Structure of the chloroplast NADH dehydrogenase-like complex: nomenclature for nuclear-encoded subunits.</title>
        <authorList>
            <person name="Ifuku K."/>
            <person name="Endo T."/>
            <person name="Shikanai T."/>
            <person name="Aro E.M."/>
        </authorList>
    </citation>
    <scope>NOMENCLATURE</scope>
    <scope>COMPONENT OF THE NDH COMPLEX</scope>
</reference>
<evidence type="ECO:0000255" key="1"/>
<evidence type="ECO:0000256" key="2">
    <source>
        <dbReference type="SAM" id="MobiDB-lite"/>
    </source>
</evidence>
<evidence type="ECO:0000269" key="3">
    <source>
    </source>
</evidence>
<evidence type="ECO:0000269" key="4">
    <source>
    </source>
</evidence>
<evidence type="ECO:0000269" key="5">
    <source>
    </source>
</evidence>
<evidence type="ECO:0000303" key="6">
    <source>
    </source>
</evidence>
<evidence type="ECO:0000303" key="7">
    <source>
    </source>
</evidence>
<evidence type="ECO:0000303" key="8">
    <source>
    </source>
</evidence>
<evidence type="ECO:0000303" key="9">
    <source>
    </source>
</evidence>
<evidence type="ECO:0000305" key="10"/>
<evidence type="ECO:0000312" key="11">
    <source>
        <dbReference type="Araport" id="AT1G15980"/>
    </source>
</evidence>
<evidence type="ECO:0000312" key="12">
    <source>
        <dbReference type="EMBL" id="AAF18495.1"/>
    </source>
</evidence>
<protein>
    <recommendedName>
        <fullName evidence="8">Photosynthetic NDH subunit of subcomplex B 1, chloroplastic</fullName>
        <shortName evidence="8">Protein PnsB1</shortName>
    </recommendedName>
    <alternativeName>
        <fullName evidence="7">NAD(P)H DEHYDROGENASE SUBUNIT 48</fullName>
    </alternativeName>
    <alternativeName>
        <fullName evidence="6">NDH-DEPENDENT CYCLIC ELECTRON FLOW 1</fullName>
    </alternativeName>
</protein>
<gene>
    <name evidence="8" type="primary">PNSB1</name>
    <name evidence="9" type="synonym">GT9</name>
    <name evidence="6" type="synonym">NDF1</name>
    <name evidence="7" type="synonym">NDH48</name>
    <name evidence="11" type="ordered locus">At1g15980</name>
    <name evidence="12" type="ORF">T24D18.8</name>
</gene>
<comment type="function">
    <text evidence="10">NDH shuttles electrons from NAD(P)H:plastoquinone, via FMN and iron-sulfur (Fe-S) centers, to quinones in the photosynthetic chain and possibly in a chloroplast respiratory chain. The immediate electron acceptor for the enzyme in this species is believed to be plastoquinone. Couples the redox reaction to proton translocation, and thus conserves the redox energy in a proton gradient.</text>
</comment>
<comment type="subunit">
    <text evidence="3 4 5">Part of the chloroplast NDH complex, composed of a mixture of chloroplast and nucleus encoded subunits. Component of the NDH subcomplex B, at least composed of PnsB1, PnsB2, PnsB3, PnsB4 and PnsB5.</text>
</comment>
<comment type="subcellular location">
    <subcellularLocation>
        <location evidence="3 4">Plastid</location>
        <location evidence="3 4">Chloroplast thylakoid membrane</location>
        <topology evidence="4">Peripheral membrane protein</topology>
        <orientation evidence="4">Stromal side</orientation>
    </subcellularLocation>
</comment>
<comment type="disruption phenotype">
    <text evidence="3 4">Malfunction of the NDH complex.</text>
</comment>
<comment type="caution">
    <text evidence="9">Was erroneously thought to be a glycosyltransferase.</text>
</comment>
<dbReference type="EMBL" id="KJ139005">
    <property type="protein sequence ID" value="AHL38945.1"/>
    <property type="molecule type" value="mRNA"/>
</dbReference>
<dbReference type="EMBL" id="AC010924">
    <property type="protein sequence ID" value="AAF18495.1"/>
    <property type="molecule type" value="Genomic_DNA"/>
</dbReference>
<dbReference type="EMBL" id="CP002684">
    <property type="protein sequence ID" value="AEE29392.1"/>
    <property type="molecule type" value="Genomic_DNA"/>
</dbReference>
<dbReference type="EMBL" id="AY057703">
    <property type="protein sequence ID" value="AAL15333.1"/>
    <property type="molecule type" value="mRNA"/>
</dbReference>
<dbReference type="EMBL" id="AY124875">
    <property type="protein sequence ID" value="AAM70584.1"/>
    <property type="molecule type" value="mRNA"/>
</dbReference>
<dbReference type="EMBL" id="AY084966">
    <property type="protein sequence ID" value="AAM61527.1"/>
    <property type="molecule type" value="mRNA"/>
</dbReference>
<dbReference type="PIR" id="D86294">
    <property type="entry name" value="D86294"/>
</dbReference>
<dbReference type="RefSeq" id="NP_563986.1">
    <property type="nucleotide sequence ID" value="NM_101466.3"/>
</dbReference>
<dbReference type="PDB" id="7WFF">
    <property type="method" value="EM"/>
    <property type="resolution" value="3.59 A"/>
    <property type="chains" value="a=1-461"/>
</dbReference>
<dbReference type="PDB" id="7WG5">
    <property type="method" value="EM"/>
    <property type="resolution" value="3.89 A"/>
    <property type="chains" value="a=1-461"/>
</dbReference>
<dbReference type="PDBsum" id="7WFF"/>
<dbReference type="PDBsum" id="7WG5"/>
<dbReference type="EMDB" id="EMD-32464"/>
<dbReference type="EMDB" id="EMD-32477"/>
<dbReference type="SMR" id="Q9S9N6"/>
<dbReference type="FunCoup" id="Q9S9N6">
    <property type="interactions" value="1470"/>
</dbReference>
<dbReference type="STRING" id="3702.Q9S9N6"/>
<dbReference type="TCDB" id="3.D.1.8.1">
    <property type="family name" value="the h+ or na+-translocating nadh dehydrogenase (ndh) family"/>
</dbReference>
<dbReference type="PaxDb" id="3702-AT1G15980.1"/>
<dbReference type="ProteomicsDB" id="234692"/>
<dbReference type="EnsemblPlants" id="AT1G15980.1">
    <property type="protein sequence ID" value="AT1G15980.1"/>
    <property type="gene ID" value="AT1G15980"/>
</dbReference>
<dbReference type="GeneID" id="838168"/>
<dbReference type="Gramene" id="AT1G15980.1">
    <property type="protein sequence ID" value="AT1G15980.1"/>
    <property type="gene ID" value="AT1G15980"/>
</dbReference>
<dbReference type="KEGG" id="ath:AT1G15980"/>
<dbReference type="Araport" id="AT1G15980"/>
<dbReference type="TAIR" id="AT1G15980">
    <property type="gene designation" value="PNSB1"/>
</dbReference>
<dbReference type="eggNOG" id="ENOG502QQIV">
    <property type="taxonomic scope" value="Eukaryota"/>
</dbReference>
<dbReference type="HOGENOM" id="CLU_585830_0_0_1"/>
<dbReference type="InParanoid" id="Q9S9N6"/>
<dbReference type="OMA" id="PLEHWAE"/>
<dbReference type="OrthoDB" id="1932779at2759"/>
<dbReference type="PhylomeDB" id="Q9S9N6"/>
<dbReference type="PRO" id="PR:Q9S9N6"/>
<dbReference type="Proteomes" id="UP000006548">
    <property type="component" value="Chromosome 1"/>
</dbReference>
<dbReference type="ExpressionAtlas" id="Q9S9N6">
    <property type="expression patterns" value="baseline and differential"/>
</dbReference>
<dbReference type="GO" id="GO:0009507">
    <property type="term" value="C:chloroplast"/>
    <property type="evidence" value="ECO:0007005"/>
    <property type="project" value="TAIR"/>
</dbReference>
<dbReference type="GO" id="GO:0009534">
    <property type="term" value="C:chloroplast thylakoid"/>
    <property type="evidence" value="ECO:0007005"/>
    <property type="project" value="TAIR"/>
</dbReference>
<dbReference type="GO" id="GO:0009535">
    <property type="term" value="C:chloroplast thylakoid membrane"/>
    <property type="evidence" value="ECO:0000314"/>
    <property type="project" value="UniProtKB"/>
</dbReference>
<dbReference type="GO" id="GO:0010598">
    <property type="term" value="C:NAD(P)H dehydrogenase complex (plastoquinone)"/>
    <property type="evidence" value="ECO:0000314"/>
    <property type="project" value="TAIR"/>
</dbReference>
<dbReference type="GO" id="GO:0005634">
    <property type="term" value="C:nucleus"/>
    <property type="evidence" value="ECO:0007005"/>
    <property type="project" value="TAIR"/>
</dbReference>
<dbReference type="GO" id="GO:0009773">
    <property type="term" value="P:photosynthetic electron transport in photosystem I"/>
    <property type="evidence" value="ECO:0000315"/>
    <property type="project" value="TAIR"/>
</dbReference>
<dbReference type="FunFam" id="3.40.50.2000:FF:000576">
    <property type="entry name" value="Photosynthetic NDH subunit of subcomplex B 1, chloroplastic"/>
    <property type="match status" value="1"/>
</dbReference>
<dbReference type="Gene3D" id="3.40.50.2000">
    <property type="entry name" value="Glycogen Phosphorylase B"/>
    <property type="match status" value="2"/>
</dbReference>
<dbReference type="InterPro" id="IPR044983">
    <property type="entry name" value="PNSB1"/>
</dbReference>
<dbReference type="PANTHER" id="PTHR37698">
    <property type="entry name" value="PHOTOSYNTHETIC NDH SUBUNIT OF SUBCOMPLEX B 1, CHLOROPLASTIC"/>
    <property type="match status" value="1"/>
</dbReference>
<dbReference type="PANTHER" id="PTHR37698:SF1">
    <property type="entry name" value="PHOTOSYNTHETIC NDH SUBUNIT OF SUBCOMPLEX B 1, CHLOROPLASTIC"/>
    <property type="match status" value="1"/>
</dbReference>
<dbReference type="SUPFAM" id="SSF53756">
    <property type="entry name" value="UDP-Glycosyltransferase/glycogen phosphorylase"/>
    <property type="match status" value="1"/>
</dbReference>
<keyword id="KW-0002">3D-structure</keyword>
<keyword id="KW-0150">Chloroplast</keyword>
<keyword id="KW-0472">Membrane</keyword>
<keyword id="KW-0934">Plastid</keyword>
<keyword id="KW-1185">Reference proteome</keyword>
<keyword id="KW-0793">Thylakoid</keyword>
<keyword id="KW-0809">Transit peptide</keyword>
<keyword id="KW-0813">Transport</keyword>
<feature type="transit peptide" description="Chloroplast" evidence="1">
    <location>
        <begin position="1"/>
        <end position="44"/>
    </location>
</feature>
<feature type="chain" id="PRO_0000431819" description="Photosynthetic NDH subunit of subcomplex B 1, chloroplastic">
    <location>
        <begin position="45"/>
        <end position="461"/>
    </location>
</feature>
<feature type="region of interest" description="Disordered" evidence="2">
    <location>
        <begin position="66"/>
        <end position="90"/>
    </location>
</feature>
<feature type="compositionally biased region" description="Basic and acidic residues" evidence="2">
    <location>
        <begin position="75"/>
        <end position="85"/>
    </location>
</feature>
<accession>Q9S9N6</accession>
<name>PNSB1_ARATH</name>